<organism>
    <name type="scientific">Drosophila melanogaster</name>
    <name type="common">Fruit fly</name>
    <dbReference type="NCBI Taxonomy" id="7227"/>
    <lineage>
        <taxon>Eukaryota</taxon>
        <taxon>Metazoa</taxon>
        <taxon>Ecdysozoa</taxon>
        <taxon>Arthropoda</taxon>
        <taxon>Hexapoda</taxon>
        <taxon>Insecta</taxon>
        <taxon>Pterygota</taxon>
        <taxon>Neoptera</taxon>
        <taxon>Endopterygota</taxon>
        <taxon>Diptera</taxon>
        <taxon>Brachycera</taxon>
        <taxon>Muscomorpha</taxon>
        <taxon>Ephydroidea</taxon>
        <taxon>Drosophilidae</taxon>
        <taxon>Drosophila</taxon>
        <taxon>Sophophora</taxon>
    </lineage>
</organism>
<dbReference type="EC" id="3.6.4.13"/>
<dbReference type="EMBL" id="AE014298">
    <property type="protein sequence ID" value="AAF48727.2"/>
    <property type="molecule type" value="Genomic_DNA"/>
</dbReference>
<dbReference type="EMBL" id="AE014298">
    <property type="protein sequence ID" value="AAO41693.1"/>
    <property type="molecule type" value="Genomic_DNA"/>
</dbReference>
<dbReference type="EMBL" id="AF145609">
    <property type="protein sequence ID" value="AAD38584.1"/>
    <property type="molecule type" value="mRNA"/>
</dbReference>
<dbReference type="RefSeq" id="NP_573214.1">
    <molecule id="Q86B47-2"/>
    <property type="nucleotide sequence ID" value="NM_132986.5"/>
</dbReference>
<dbReference type="RefSeq" id="NP_788922.1">
    <molecule id="Q86B47-1"/>
    <property type="nucleotide sequence ID" value="NM_176749.2"/>
</dbReference>
<dbReference type="SMR" id="Q86B47"/>
<dbReference type="BioGRID" id="59053">
    <property type="interactions" value="6"/>
</dbReference>
<dbReference type="FunCoup" id="Q86B47">
    <property type="interactions" value="2199"/>
</dbReference>
<dbReference type="IntAct" id="Q86B47">
    <property type="interactions" value="38"/>
</dbReference>
<dbReference type="STRING" id="7227.FBpp0074214"/>
<dbReference type="GlyGen" id="Q86B47">
    <property type="glycosylation" value="2 sites"/>
</dbReference>
<dbReference type="iPTMnet" id="Q86B47"/>
<dbReference type="PaxDb" id="7227-FBpp0074214"/>
<dbReference type="DNASU" id="32725"/>
<dbReference type="EnsemblMetazoa" id="FBtr0074439">
    <molecule id="Q86B47-2"/>
    <property type="protein sequence ID" value="FBpp0074213"/>
    <property type="gene ID" value="FBgn0027602"/>
</dbReference>
<dbReference type="EnsemblMetazoa" id="FBtr0074440">
    <molecule id="Q86B47-1"/>
    <property type="protein sequence ID" value="FBpp0074214"/>
    <property type="gene ID" value="FBgn0027602"/>
</dbReference>
<dbReference type="GeneID" id="32725"/>
<dbReference type="KEGG" id="dme:Dmel_CG8611"/>
<dbReference type="UCSC" id="CG8611-RA">
    <property type="organism name" value="d. melanogaster"/>
</dbReference>
<dbReference type="UCSC" id="CG8611-RB">
    <molecule id="Q86B47-1"/>
    <property type="organism name" value="d. melanogaster"/>
</dbReference>
<dbReference type="AGR" id="FB:FBgn0027602"/>
<dbReference type="FlyBase" id="FBgn0027602">
    <property type="gene designation" value="CG8611"/>
</dbReference>
<dbReference type="VEuPathDB" id="VectorBase:FBgn0027602"/>
<dbReference type="eggNOG" id="KOG0348">
    <property type="taxonomic scope" value="Eukaryota"/>
</dbReference>
<dbReference type="GeneTree" id="ENSGT00550000075041"/>
<dbReference type="InParanoid" id="Q86B47"/>
<dbReference type="OMA" id="QMPRAGD"/>
<dbReference type="OrthoDB" id="422663at2759"/>
<dbReference type="PhylomeDB" id="Q86B47"/>
<dbReference type="BioGRID-ORCS" id="32725">
    <property type="hits" value="0 hits in 1 CRISPR screen"/>
</dbReference>
<dbReference type="GenomeRNAi" id="32725"/>
<dbReference type="PRO" id="PR:Q86B47"/>
<dbReference type="Proteomes" id="UP000000803">
    <property type="component" value="Chromosome X"/>
</dbReference>
<dbReference type="Bgee" id="FBgn0027602">
    <property type="expression patterns" value="Expressed in posterior terminal follicle cell in ovary and 62 other cell types or tissues"/>
</dbReference>
<dbReference type="ExpressionAtlas" id="Q86B47">
    <property type="expression patterns" value="baseline and differential"/>
</dbReference>
<dbReference type="GO" id="GO:0005634">
    <property type="term" value="C:nucleus"/>
    <property type="evidence" value="ECO:0000318"/>
    <property type="project" value="GO_Central"/>
</dbReference>
<dbReference type="GO" id="GO:0005524">
    <property type="term" value="F:ATP binding"/>
    <property type="evidence" value="ECO:0007669"/>
    <property type="project" value="UniProtKB-KW"/>
</dbReference>
<dbReference type="GO" id="GO:0016887">
    <property type="term" value="F:ATP hydrolysis activity"/>
    <property type="evidence" value="ECO:0007669"/>
    <property type="project" value="RHEA"/>
</dbReference>
<dbReference type="GO" id="GO:0003723">
    <property type="term" value="F:RNA binding"/>
    <property type="evidence" value="ECO:0007669"/>
    <property type="project" value="UniProtKB-KW"/>
</dbReference>
<dbReference type="GO" id="GO:0003724">
    <property type="term" value="F:RNA helicase activity"/>
    <property type="evidence" value="ECO:0000250"/>
    <property type="project" value="FlyBase"/>
</dbReference>
<dbReference type="GO" id="GO:0042254">
    <property type="term" value="P:ribosome biogenesis"/>
    <property type="evidence" value="ECO:0000318"/>
    <property type="project" value="GO_Central"/>
</dbReference>
<dbReference type="CDD" id="cd17949">
    <property type="entry name" value="DEADc_DDX31"/>
    <property type="match status" value="1"/>
</dbReference>
<dbReference type="CDD" id="cd18787">
    <property type="entry name" value="SF2_C_DEAD"/>
    <property type="match status" value="1"/>
</dbReference>
<dbReference type="FunFam" id="3.40.50.300:FF:001399">
    <property type="entry name" value="RNA helicase"/>
    <property type="match status" value="1"/>
</dbReference>
<dbReference type="FunFam" id="3.40.50.300:FF:002651">
    <property type="entry name" value="RNA helicase"/>
    <property type="match status" value="1"/>
</dbReference>
<dbReference type="Gene3D" id="3.40.50.300">
    <property type="entry name" value="P-loop containing nucleotide triphosphate hydrolases"/>
    <property type="match status" value="2"/>
</dbReference>
<dbReference type="InterPro" id="IPR011545">
    <property type="entry name" value="DEAD/DEAH_box_helicase_dom"/>
</dbReference>
<dbReference type="InterPro" id="IPR014001">
    <property type="entry name" value="Helicase_ATP-bd"/>
</dbReference>
<dbReference type="InterPro" id="IPR001650">
    <property type="entry name" value="Helicase_C-like"/>
</dbReference>
<dbReference type="InterPro" id="IPR027417">
    <property type="entry name" value="P-loop_NTPase"/>
</dbReference>
<dbReference type="InterPro" id="IPR000629">
    <property type="entry name" value="RNA-helicase_DEAD-box_CS"/>
</dbReference>
<dbReference type="InterPro" id="IPR025313">
    <property type="entry name" value="SPB4-like_CTE"/>
</dbReference>
<dbReference type="PANTHER" id="PTHR24031">
    <property type="entry name" value="RNA HELICASE"/>
    <property type="match status" value="1"/>
</dbReference>
<dbReference type="Pfam" id="PF13959">
    <property type="entry name" value="CTE_SPB4"/>
    <property type="match status" value="1"/>
</dbReference>
<dbReference type="Pfam" id="PF00270">
    <property type="entry name" value="DEAD"/>
    <property type="match status" value="1"/>
</dbReference>
<dbReference type="Pfam" id="PF00271">
    <property type="entry name" value="Helicase_C"/>
    <property type="match status" value="1"/>
</dbReference>
<dbReference type="SMART" id="SM00487">
    <property type="entry name" value="DEXDc"/>
    <property type="match status" value="1"/>
</dbReference>
<dbReference type="SMART" id="SM01178">
    <property type="entry name" value="DUF4217"/>
    <property type="match status" value="1"/>
</dbReference>
<dbReference type="SMART" id="SM00490">
    <property type="entry name" value="HELICc"/>
    <property type="match status" value="1"/>
</dbReference>
<dbReference type="SUPFAM" id="SSF52540">
    <property type="entry name" value="P-loop containing nucleoside triphosphate hydrolases"/>
    <property type="match status" value="1"/>
</dbReference>
<dbReference type="PROSITE" id="PS00039">
    <property type="entry name" value="DEAD_ATP_HELICASE"/>
    <property type="match status" value="1"/>
</dbReference>
<dbReference type="PROSITE" id="PS51192">
    <property type="entry name" value="HELICASE_ATP_BIND_1"/>
    <property type="match status" value="1"/>
</dbReference>
<dbReference type="PROSITE" id="PS51194">
    <property type="entry name" value="HELICASE_CTER"/>
    <property type="match status" value="1"/>
</dbReference>
<dbReference type="PROSITE" id="PS51195">
    <property type="entry name" value="Q_MOTIF"/>
    <property type="match status" value="1"/>
</dbReference>
<sequence length="975" mass="107968">MVENISLNVTVKSSARKNQQQSPALSVKKRAQKSQDFDFQFNVDKPKVKAIVVRRRAPPSKVEPTNSSVPNTTKSPTPSVSSSKSAISTLSASPKANASNDDLMFNVSPTKPPVKSVLGDDFMLNVTTKPVVAQKAKPKITRAERLGKKQRQGKPLTKLSEEQITRALKSNKKPKNPNQLPTPGDLFRAQLEEERRQKRREEGGGDQEASADEEDAKNNSGGGSPRVKPSSAVKESKKSSDIEDSGESGEESATSDEEPDESSAQSPGQEKEPKQTAKKPPKAEETSSTNRFRTKKIGLFDQSDVEALKQLGQRAVKPVKETIFTGSKISTLGLHPHAVKNLEDLLSIRELTSVQQKTIPEVLQGKDVLVRSQTGSGKTLAYALPLVELLQKQQPRIQRKDGVLALVIVPTRELVMQTYELIQKLVKPYTWIVPGSLLGGESRKSEKARLRKGINILIGTPGRLVDHLLHTASFKLTKLQFLILDEADRLLELGYERDVKQLVEAIDKQRAECEDKELPQLQRMLLSATLTSQVQQLAGLTLKNPLYIDNSDEAASAALKSKDGYQKETIEALLEVDDGLGEYQEDVTGVLSIPENLQLSYVVVPPKLRLVALSSLLAKEVDASPKQFKAIVFMSTTEMVNFHHDMLNEALTRRVLDEEDEQEKGDSDDDGDIPLLQGLRFFKLHGSMTQTERQGVFRGFRDCASCVLLATDVVGRGIDVPDIKLVVQYTPPQTTADFVHRVGRTARAGRKGRAVLFLTPSEAQFVRHLEKKRIRIQQGDMYAYLQTLLPKDDEARTVQEAASNLQHKFQTLLEDDRELHDKSCKAFVSWMKFYSTFPKELKPIFNVRIAHMGHFAKSFALKEAPSKFAAKHAAPKAAPPTNRLTYTERDPEKIQAQKRAKRRFTTTVSGEVRQLQQRDVGAQKPGAPPPKGGFIGGGVGRSSFMKSLGKSRALNMSEFDSGLPPEGAAKRRKQA</sequence>
<reference key="1">
    <citation type="journal article" date="2000" name="Science">
        <title>The genome sequence of Drosophila melanogaster.</title>
        <authorList>
            <person name="Adams M.D."/>
            <person name="Celniker S.E."/>
            <person name="Holt R.A."/>
            <person name="Evans C.A."/>
            <person name="Gocayne J.D."/>
            <person name="Amanatides P.G."/>
            <person name="Scherer S.E."/>
            <person name="Li P.W."/>
            <person name="Hoskins R.A."/>
            <person name="Galle R.F."/>
            <person name="George R.A."/>
            <person name="Lewis S.E."/>
            <person name="Richards S."/>
            <person name="Ashburner M."/>
            <person name="Henderson S.N."/>
            <person name="Sutton G.G."/>
            <person name="Wortman J.R."/>
            <person name="Yandell M.D."/>
            <person name="Zhang Q."/>
            <person name="Chen L.X."/>
            <person name="Brandon R.C."/>
            <person name="Rogers Y.-H.C."/>
            <person name="Blazej R.G."/>
            <person name="Champe M."/>
            <person name="Pfeiffer B.D."/>
            <person name="Wan K.H."/>
            <person name="Doyle C."/>
            <person name="Baxter E.G."/>
            <person name="Helt G."/>
            <person name="Nelson C.R."/>
            <person name="Miklos G.L.G."/>
            <person name="Abril J.F."/>
            <person name="Agbayani A."/>
            <person name="An H.-J."/>
            <person name="Andrews-Pfannkoch C."/>
            <person name="Baldwin D."/>
            <person name="Ballew R.M."/>
            <person name="Basu A."/>
            <person name="Baxendale J."/>
            <person name="Bayraktaroglu L."/>
            <person name="Beasley E.M."/>
            <person name="Beeson K.Y."/>
            <person name="Benos P.V."/>
            <person name="Berman B.P."/>
            <person name="Bhandari D."/>
            <person name="Bolshakov S."/>
            <person name="Borkova D."/>
            <person name="Botchan M.R."/>
            <person name="Bouck J."/>
            <person name="Brokstein P."/>
            <person name="Brottier P."/>
            <person name="Burtis K.C."/>
            <person name="Busam D.A."/>
            <person name="Butler H."/>
            <person name="Cadieu E."/>
            <person name="Center A."/>
            <person name="Chandra I."/>
            <person name="Cherry J.M."/>
            <person name="Cawley S."/>
            <person name="Dahlke C."/>
            <person name="Davenport L.B."/>
            <person name="Davies P."/>
            <person name="de Pablos B."/>
            <person name="Delcher A."/>
            <person name="Deng Z."/>
            <person name="Mays A.D."/>
            <person name="Dew I."/>
            <person name="Dietz S.M."/>
            <person name="Dodson K."/>
            <person name="Doup L.E."/>
            <person name="Downes M."/>
            <person name="Dugan-Rocha S."/>
            <person name="Dunkov B.C."/>
            <person name="Dunn P."/>
            <person name="Durbin K.J."/>
            <person name="Evangelista C.C."/>
            <person name="Ferraz C."/>
            <person name="Ferriera S."/>
            <person name="Fleischmann W."/>
            <person name="Fosler C."/>
            <person name="Gabrielian A.E."/>
            <person name="Garg N.S."/>
            <person name="Gelbart W.M."/>
            <person name="Glasser K."/>
            <person name="Glodek A."/>
            <person name="Gong F."/>
            <person name="Gorrell J.H."/>
            <person name="Gu Z."/>
            <person name="Guan P."/>
            <person name="Harris M."/>
            <person name="Harris N.L."/>
            <person name="Harvey D.A."/>
            <person name="Heiman T.J."/>
            <person name="Hernandez J.R."/>
            <person name="Houck J."/>
            <person name="Hostin D."/>
            <person name="Houston K.A."/>
            <person name="Howland T.J."/>
            <person name="Wei M.-H."/>
            <person name="Ibegwam C."/>
            <person name="Jalali M."/>
            <person name="Kalush F."/>
            <person name="Karpen G.H."/>
            <person name="Ke Z."/>
            <person name="Kennison J.A."/>
            <person name="Ketchum K.A."/>
            <person name="Kimmel B.E."/>
            <person name="Kodira C.D."/>
            <person name="Kraft C.L."/>
            <person name="Kravitz S."/>
            <person name="Kulp D."/>
            <person name="Lai Z."/>
            <person name="Lasko P."/>
            <person name="Lei Y."/>
            <person name="Levitsky A.A."/>
            <person name="Li J.H."/>
            <person name="Li Z."/>
            <person name="Liang Y."/>
            <person name="Lin X."/>
            <person name="Liu X."/>
            <person name="Mattei B."/>
            <person name="McIntosh T.C."/>
            <person name="McLeod M.P."/>
            <person name="McPherson D."/>
            <person name="Merkulov G."/>
            <person name="Milshina N.V."/>
            <person name="Mobarry C."/>
            <person name="Morris J."/>
            <person name="Moshrefi A."/>
            <person name="Mount S.M."/>
            <person name="Moy M."/>
            <person name="Murphy B."/>
            <person name="Murphy L."/>
            <person name="Muzny D.M."/>
            <person name="Nelson D.L."/>
            <person name="Nelson D.R."/>
            <person name="Nelson K.A."/>
            <person name="Nixon K."/>
            <person name="Nusskern D.R."/>
            <person name="Pacleb J.M."/>
            <person name="Palazzolo M."/>
            <person name="Pittman G.S."/>
            <person name="Pan S."/>
            <person name="Pollard J."/>
            <person name="Puri V."/>
            <person name="Reese M.G."/>
            <person name="Reinert K."/>
            <person name="Remington K."/>
            <person name="Saunders R.D.C."/>
            <person name="Scheeler F."/>
            <person name="Shen H."/>
            <person name="Shue B.C."/>
            <person name="Siden-Kiamos I."/>
            <person name="Simpson M."/>
            <person name="Skupski M.P."/>
            <person name="Smith T.J."/>
            <person name="Spier E."/>
            <person name="Spradling A.C."/>
            <person name="Stapleton M."/>
            <person name="Strong R."/>
            <person name="Sun E."/>
            <person name="Svirskas R."/>
            <person name="Tector C."/>
            <person name="Turner R."/>
            <person name="Venter E."/>
            <person name="Wang A.H."/>
            <person name="Wang X."/>
            <person name="Wang Z.-Y."/>
            <person name="Wassarman D.A."/>
            <person name="Weinstock G.M."/>
            <person name="Weissenbach J."/>
            <person name="Williams S.M."/>
            <person name="Woodage T."/>
            <person name="Worley K.C."/>
            <person name="Wu D."/>
            <person name="Yang S."/>
            <person name="Yao Q.A."/>
            <person name="Ye J."/>
            <person name="Yeh R.-F."/>
            <person name="Zaveri J.S."/>
            <person name="Zhan M."/>
            <person name="Zhang G."/>
            <person name="Zhao Q."/>
            <person name="Zheng L."/>
            <person name="Zheng X.H."/>
            <person name="Zhong F.N."/>
            <person name="Zhong W."/>
            <person name="Zhou X."/>
            <person name="Zhu S.C."/>
            <person name="Zhu X."/>
            <person name="Smith H.O."/>
            <person name="Gibbs R.A."/>
            <person name="Myers E.W."/>
            <person name="Rubin G.M."/>
            <person name="Venter J.C."/>
        </authorList>
    </citation>
    <scope>NUCLEOTIDE SEQUENCE [LARGE SCALE GENOMIC DNA]</scope>
    <source>
        <strain>Berkeley</strain>
    </source>
</reference>
<reference key="2">
    <citation type="journal article" date="2002" name="Genome Biol.">
        <title>Annotation of the Drosophila melanogaster euchromatic genome: a systematic review.</title>
        <authorList>
            <person name="Misra S."/>
            <person name="Crosby M.A."/>
            <person name="Mungall C.J."/>
            <person name="Matthews B.B."/>
            <person name="Campbell K.S."/>
            <person name="Hradecky P."/>
            <person name="Huang Y."/>
            <person name="Kaminker J.S."/>
            <person name="Millburn G.H."/>
            <person name="Prochnik S.E."/>
            <person name="Smith C.D."/>
            <person name="Tupy J.L."/>
            <person name="Whitfield E.J."/>
            <person name="Bayraktaroglu L."/>
            <person name="Berman B.P."/>
            <person name="Bettencourt B.R."/>
            <person name="Celniker S.E."/>
            <person name="de Grey A.D.N.J."/>
            <person name="Drysdale R.A."/>
            <person name="Harris N.L."/>
            <person name="Richter J."/>
            <person name="Russo S."/>
            <person name="Schroeder A.J."/>
            <person name="Shu S.Q."/>
            <person name="Stapleton M."/>
            <person name="Yamada C."/>
            <person name="Ashburner M."/>
            <person name="Gelbart W.M."/>
            <person name="Rubin G.M."/>
            <person name="Lewis S.E."/>
        </authorList>
    </citation>
    <scope>GENOME REANNOTATION</scope>
    <scope>ALTERNATIVE SPLICING</scope>
    <source>
        <strain>Berkeley</strain>
    </source>
</reference>
<reference key="3">
    <citation type="journal article" date="2000" name="Science">
        <title>A Drosophila complementary DNA resource.</title>
        <authorList>
            <person name="Rubin G.M."/>
            <person name="Hong L."/>
            <person name="Brokstein P."/>
            <person name="Evans-Holm M."/>
            <person name="Frise E."/>
            <person name="Stapleton M."/>
            <person name="Harvey D.A."/>
        </authorList>
    </citation>
    <scope>NUCLEOTIDE SEQUENCE [LARGE SCALE MRNA] (ISOFORM A)</scope>
    <source>
        <strain>Berkeley</strain>
        <tissue>Head</tissue>
    </source>
</reference>
<reference key="4">
    <citation type="journal article" date="2007" name="Mol. Biosyst.">
        <title>An integrated chemical, mass spectrometric and computational strategy for (quantitative) phosphoproteomics: application to Drosophila melanogaster Kc167 cells.</title>
        <authorList>
            <person name="Bodenmiller B."/>
            <person name="Mueller L.N."/>
            <person name="Pedrioli P.G.A."/>
            <person name="Pflieger D."/>
            <person name="Juenger M.A."/>
            <person name="Eng J.K."/>
            <person name="Aebersold R."/>
            <person name="Tao W.A."/>
        </authorList>
    </citation>
    <scope>PHOSPHORYLATION [LARGE SCALE ANALYSIS] AT SER-667</scope>
    <scope>IDENTIFICATION BY MASS SPECTROMETRY</scope>
</reference>
<reference key="5">
    <citation type="journal article" date="2008" name="J. Proteome Res.">
        <title>Phosphoproteome analysis of Drosophila melanogaster embryos.</title>
        <authorList>
            <person name="Zhai B."/>
            <person name="Villen J."/>
            <person name="Beausoleil S.A."/>
            <person name="Mintseris J."/>
            <person name="Gygi S.P."/>
        </authorList>
    </citation>
    <scope>PHOSPHORYLATION [LARGE SCALE ANALYSIS] AT SER-75; SER-99; SER-210; SER-220 AND SER-224</scope>
    <scope>IDENTIFICATION BY MASS SPECTROMETRY</scope>
    <source>
        <tissue>Embryo</tissue>
    </source>
</reference>
<name>Y8611_DROME</name>
<feature type="chain" id="PRO_0000372851" description="Probable ATP-dependent RNA helicase CG8611">
    <location>
        <begin position="1"/>
        <end position="975"/>
    </location>
</feature>
<feature type="domain" description="Helicase ATP-binding" evidence="2">
    <location>
        <begin position="359"/>
        <end position="548"/>
    </location>
</feature>
<feature type="domain" description="Helicase C-terminal" evidence="3">
    <location>
        <begin position="616"/>
        <end position="789"/>
    </location>
</feature>
<feature type="region of interest" description="Disordered" evidence="4">
    <location>
        <begin position="1"/>
        <end position="38"/>
    </location>
</feature>
<feature type="region of interest" description="Disordered" evidence="4">
    <location>
        <begin position="50"/>
        <end position="104"/>
    </location>
</feature>
<feature type="region of interest" description="Disordered" evidence="4">
    <location>
        <begin position="127"/>
        <end position="295"/>
    </location>
</feature>
<feature type="region of interest" description="Disordered" evidence="4">
    <location>
        <begin position="915"/>
        <end position="942"/>
    </location>
</feature>
<feature type="region of interest" description="Disordered" evidence="4">
    <location>
        <begin position="955"/>
        <end position="975"/>
    </location>
</feature>
<feature type="short sequence motif" description="Q motif">
    <location>
        <begin position="327"/>
        <end position="356"/>
    </location>
</feature>
<feature type="short sequence motif" description="DEAD box">
    <location>
        <begin position="485"/>
        <end position="488"/>
    </location>
</feature>
<feature type="compositionally biased region" description="Polar residues" evidence="4">
    <location>
        <begin position="1"/>
        <end position="24"/>
    </location>
</feature>
<feature type="compositionally biased region" description="Low complexity" evidence="4">
    <location>
        <begin position="64"/>
        <end position="94"/>
    </location>
</feature>
<feature type="compositionally biased region" description="Basic and acidic residues" evidence="4">
    <location>
        <begin position="190"/>
        <end position="203"/>
    </location>
</feature>
<feature type="compositionally biased region" description="Acidic residues" evidence="4">
    <location>
        <begin position="242"/>
        <end position="261"/>
    </location>
</feature>
<feature type="compositionally biased region" description="Basic and acidic residues" evidence="4">
    <location>
        <begin position="269"/>
        <end position="285"/>
    </location>
</feature>
<feature type="binding site" evidence="2">
    <location>
        <begin position="372"/>
        <end position="379"/>
    </location>
    <ligand>
        <name>ATP</name>
        <dbReference type="ChEBI" id="CHEBI:30616"/>
    </ligand>
</feature>
<feature type="modified residue" description="Phosphoserine" evidence="6">
    <location>
        <position position="75"/>
    </location>
</feature>
<feature type="modified residue" description="Phosphoserine" evidence="6">
    <location>
        <position position="99"/>
    </location>
</feature>
<feature type="modified residue" description="Phosphoserine" evidence="6">
    <location>
        <position position="210"/>
    </location>
</feature>
<feature type="modified residue" description="Phosphoserine" evidence="6">
    <location>
        <position position="220"/>
    </location>
</feature>
<feature type="modified residue" description="Phosphoserine" evidence="6">
    <location>
        <position position="224"/>
    </location>
</feature>
<feature type="modified residue" description="Phosphoserine" evidence="5">
    <location>
        <position position="667"/>
    </location>
</feature>
<feature type="splice variant" id="VSP_037205" description="In isoform A." evidence="7">
    <location>
        <position position="19"/>
    </location>
</feature>
<proteinExistence type="evidence at protein level"/>
<comment type="function">
    <text evidence="1">Probable ATP-dependent RNA helicase.</text>
</comment>
<comment type="catalytic activity">
    <reaction>
        <text>ATP + H2O = ADP + phosphate + H(+)</text>
        <dbReference type="Rhea" id="RHEA:13065"/>
        <dbReference type="ChEBI" id="CHEBI:15377"/>
        <dbReference type="ChEBI" id="CHEBI:15378"/>
        <dbReference type="ChEBI" id="CHEBI:30616"/>
        <dbReference type="ChEBI" id="CHEBI:43474"/>
        <dbReference type="ChEBI" id="CHEBI:456216"/>
        <dbReference type="EC" id="3.6.4.13"/>
    </reaction>
</comment>
<comment type="alternative products">
    <event type="alternative splicing"/>
    <isoform>
        <id>Q86B47-1</id>
        <name>B</name>
        <sequence type="displayed"/>
    </isoform>
    <isoform>
        <id>Q86B47-2</id>
        <name>A</name>
        <sequence type="described" ref="VSP_037205"/>
    </isoform>
</comment>
<comment type="similarity">
    <text evidence="8">Belongs to the DEAD box helicase family. DDX31/DBP7 subfamily.</text>
</comment>
<accession>Q86B47</accession>
<accession>Q9VX53</accession>
<accession>Q9Y159</accession>
<evidence type="ECO:0000250" key="1"/>
<evidence type="ECO:0000255" key="2">
    <source>
        <dbReference type="PROSITE-ProRule" id="PRU00541"/>
    </source>
</evidence>
<evidence type="ECO:0000255" key="3">
    <source>
        <dbReference type="PROSITE-ProRule" id="PRU00542"/>
    </source>
</evidence>
<evidence type="ECO:0000256" key="4">
    <source>
        <dbReference type="SAM" id="MobiDB-lite"/>
    </source>
</evidence>
<evidence type="ECO:0000269" key="5">
    <source>
    </source>
</evidence>
<evidence type="ECO:0000269" key="6">
    <source>
    </source>
</evidence>
<evidence type="ECO:0000303" key="7">
    <source>
    </source>
</evidence>
<evidence type="ECO:0000305" key="8"/>
<protein>
    <recommendedName>
        <fullName>Probable ATP-dependent RNA helicase CG8611</fullName>
        <ecNumber>3.6.4.13</ecNumber>
    </recommendedName>
</protein>
<gene>
    <name type="ORF">CG8611</name>
</gene>
<keyword id="KW-0025">Alternative splicing</keyword>
<keyword id="KW-0067">ATP-binding</keyword>
<keyword id="KW-0347">Helicase</keyword>
<keyword id="KW-0378">Hydrolase</keyword>
<keyword id="KW-0547">Nucleotide-binding</keyword>
<keyword id="KW-0597">Phosphoprotein</keyword>
<keyword id="KW-1185">Reference proteome</keyword>
<keyword id="KW-0694">RNA-binding</keyword>